<dbReference type="EMBL" id="CP000903">
    <property type="protein sequence ID" value="ABY42467.1"/>
    <property type="molecule type" value="Genomic_DNA"/>
</dbReference>
<dbReference type="RefSeq" id="WP_002030525.1">
    <property type="nucleotide sequence ID" value="NC_010184.1"/>
</dbReference>
<dbReference type="SMR" id="A9VKN2"/>
<dbReference type="KEGG" id="bwe:BcerKBAB4_1220"/>
<dbReference type="eggNOG" id="COG1556">
    <property type="taxonomic scope" value="Bacteria"/>
</dbReference>
<dbReference type="HOGENOM" id="CLU_090664_1_0_9"/>
<dbReference type="Proteomes" id="UP000002154">
    <property type="component" value="Chromosome"/>
</dbReference>
<dbReference type="GO" id="GO:0006089">
    <property type="term" value="P:lactate metabolic process"/>
    <property type="evidence" value="ECO:0007669"/>
    <property type="project" value="UniProtKB-UniRule"/>
</dbReference>
<dbReference type="Gene3D" id="3.40.50.10420">
    <property type="entry name" value="NagB/RpiA/CoA transferase-like"/>
    <property type="match status" value="1"/>
</dbReference>
<dbReference type="HAMAP" id="MF_02104">
    <property type="entry name" value="LutC"/>
    <property type="match status" value="1"/>
</dbReference>
<dbReference type="InterPro" id="IPR024185">
    <property type="entry name" value="FTHF_cligase-like_sf"/>
</dbReference>
<dbReference type="InterPro" id="IPR003741">
    <property type="entry name" value="LUD_dom"/>
</dbReference>
<dbReference type="InterPro" id="IPR022823">
    <property type="entry name" value="LutC"/>
</dbReference>
<dbReference type="InterPro" id="IPR037171">
    <property type="entry name" value="NagB/RpiA_transferase-like"/>
</dbReference>
<dbReference type="PANTHER" id="PTHR43682">
    <property type="entry name" value="LACTATE UTILIZATION PROTEIN C"/>
    <property type="match status" value="1"/>
</dbReference>
<dbReference type="PANTHER" id="PTHR43682:SF1">
    <property type="entry name" value="LACTATE UTILIZATION PROTEIN C"/>
    <property type="match status" value="1"/>
</dbReference>
<dbReference type="Pfam" id="PF02589">
    <property type="entry name" value="LUD_dom"/>
    <property type="match status" value="1"/>
</dbReference>
<dbReference type="SUPFAM" id="SSF100950">
    <property type="entry name" value="NagB/RpiA/CoA transferase-like"/>
    <property type="match status" value="1"/>
</dbReference>
<organism>
    <name type="scientific">Bacillus mycoides (strain KBAB4)</name>
    <name type="common">Bacillus weihenstephanensis</name>
    <dbReference type="NCBI Taxonomy" id="315730"/>
    <lineage>
        <taxon>Bacteria</taxon>
        <taxon>Bacillati</taxon>
        <taxon>Bacillota</taxon>
        <taxon>Bacilli</taxon>
        <taxon>Bacillales</taxon>
        <taxon>Bacillaceae</taxon>
        <taxon>Bacillus</taxon>
        <taxon>Bacillus cereus group</taxon>
    </lineage>
</organism>
<feature type="chain" id="PRO_0000384009" description="Lactate utilization protein C 2">
    <location>
        <begin position="1"/>
        <end position="236"/>
    </location>
</feature>
<sequence length="236" mass="26423">MTGLIQNRESFLDNIAKELGRARKTEGVERPAWKSNVNVETLKDYSQEELLEVFKKQCTNIHTTVVETTNDRLREDIQKVIVENGGGPIILSADERFDSYGLTSLFKEELPKQNVEVNVWDPEKKEENMRIAEKANIGIAFSDYTLAESGTIVVQSHKGQGRSLHFLPTVYFAIIPRETLVPRITQAVQDMNSRVEKGEAVASCINFITGPSNSADIEMNLVVGVHGPLKAVYFIV</sequence>
<evidence type="ECO:0000255" key="1">
    <source>
        <dbReference type="HAMAP-Rule" id="MF_02104"/>
    </source>
</evidence>
<proteinExistence type="inferred from homology"/>
<protein>
    <recommendedName>
        <fullName evidence="1">Lactate utilization protein C 2</fullName>
    </recommendedName>
</protein>
<name>LUTC2_BACMK</name>
<gene>
    <name evidence="1" type="primary">lutC2</name>
    <name type="ordered locus">BcerKBAB4_1220</name>
</gene>
<comment type="function">
    <text evidence="1">Is involved in L-lactate degradation and allows cells to grow with lactate as the sole carbon source.</text>
</comment>
<comment type="similarity">
    <text evidence="1">Belongs to the LutC/YkgG family.</text>
</comment>
<accession>A9VKN2</accession>
<reference key="1">
    <citation type="journal article" date="2008" name="Chem. Biol. Interact.">
        <title>Extending the Bacillus cereus group genomics to putative food-borne pathogens of different toxicity.</title>
        <authorList>
            <person name="Lapidus A."/>
            <person name="Goltsman E."/>
            <person name="Auger S."/>
            <person name="Galleron N."/>
            <person name="Segurens B."/>
            <person name="Dossat C."/>
            <person name="Land M.L."/>
            <person name="Broussolle V."/>
            <person name="Brillard J."/>
            <person name="Guinebretiere M.-H."/>
            <person name="Sanchis V."/>
            <person name="Nguen-the C."/>
            <person name="Lereclus D."/>
            <person name="Richardson P."/>
            <person name="Wincker P."/>
            <person name="Weissenbach J."/>
            <person name="Ehrlich S.D."/>
            <person name="Sorokin A."/>
        </authorList>
    </citation>
    <scope>NUCLEOTIDE SEQUENCE [LARGE SCALE GENOMIC DNA]</scope>
    <source>
        <strain>KBAB4</strain>
    </source>
</reference>